<keyword id="KW-1003">Cell membrane</keyword>
<keyword id="KW-0249">Electron transport</keyword>
<keyword id="KW-0349">Heme</keyword>
<keyword id="KW-0408">Iron</keyword>
<keyword id="KW-0472">Membrane</keyword>
<keyword id="KW-0479">Metal-binding</keyword>
<keyword id="KW-0560">Oxidoreductase</keyword>
<keyword id="KW-0677">Repeat</keyword>
<keyword id="KW-0679">Respiratory chain</keyword>
<keyword id="KW-0732">Signal</keyword>
<keyword id="KW-0813">Transport</keyword>
<reference key="1">
    <citation type="submission" date="1996-11" db="EMBL/GenBank/DDBJ databases">
        <authorList>
            <person name="Thurner C.A.K."/>
        </authorList>
    </citation>
    <scope>NUCLEOTIDE SEQUENCE [GENOMIC DNA]</scope>
    <source>
        <strain>ATCC 51845 / DSM 6160 / JCM 16395 / LMG 18890 / DES 11</strain>
    </source>
</reference>
<name>ADHB_KOMEU</name>
<dbReference type="EC" id="1.1.5.5" evidence="1"/>
<dbReference type="EMBL" id="Y09480">
    <property type="protein sequence ID" value="CAA70689.1"/>
    <property type="molecule type" value="Genomic_DNA"/>
</dbReference>
<dbReference type="SMR" id="P0A389"/>
<dbReference type="STRING" id="33995.KOEU_13890"/>
<dbReference type="GO" id="GO:0005886">
    <property type="term" value="C:plasma membrane"/>
    <property type="evidence" value="ECO:0007669"/>
    <property type="project" value="UniProtKB-SubCell"/>
</dbReference>
<dbReference type="GO" id="GO:0009055">
    <property type="term" value="F:electron transfer activity"/>
    <property type="evidence" value="ECO:0007669"/>
    <property type="project" value="InterPro"/>
</dbReference>
<dbReference type="GO" id="GO:0020037">
    <property type="term" value="F:heme binding"/>
    <property type="evidence" value="ECO:0007669"/>
    <property type="project" value="InterPro"/>
</dbReference>
<dbReference type="GO" id="GO:0005506">
    <property type="term" value="F:iron ion binding"/>
    <property type="evidence" value="ECO:0007669"/>
    <property type="project" value="InterPro"/>
</dbReference>
<dbReference type="GO" id="GO:0016614">
    <property type="term" value="F:oxidoreductase activity, acting on CH-OH group of donors"/>
    <property type="evidence" value="ECO:0007669"/>
    <property type="project" value="InterPro"/>
</dbReference>
<dbReference type="Gene3D" id="1.10.760.10">
    <property type="entry name" value="Cytochrome c-like domain"/>
    <property type="match status" value="3"/>
</dbReference>
<dbReference type="InterPro" id="IPR009056">
    <property type="entry name" value="Cyt_c-like_dom"/>
</dbReference>
<dbReference type="InterPro" id="IPR036909">
    <property type="entry name" value="Cyt_c-like_dom_sf"/>
</dbReference>
<dbReference type="InterPro" id="IPR051459">
    <property type="entry name" value="Cytochrome_c-type_DH"/>
</dbReference>
<dbReference type="InterPro" id="IPR014353">
    <property type="entry name" value="Membr-bd_ADH_cyt_c"/>
</dbReference>
<dbReference type="PANTHER" id="PTHR35008:SF8">
    <property type="entry name" value="ALCOHOL DEHYDROGENASE CYTOCHROME C SUBUNIT"/>
    <property type="match status" value="1"/>
</dbReference>
<dbReference type="PANTHER" id="PTHR35008">
    <property type="entry name" value="BLL4482 PROTEIN-RELATED"/>
    <property type="match status" value="1"/>
</dbReference>
<dbReference type="Pfam" id="PF00034">
    <property type="entry name" value="Cytochrom_C"/>
    <property type="match status" value="3"/>
</dbReference>
<dbReference type="PIRSF" id="PIRSF000018">
    <property type="entry name" value="Mb_ADH_cyt_c"/>
    <property type="match status" value="1"/>
</dbReference>
<dbReference type="SUPFAM" id="SSF46626">
    <property type="entry name" value="Cytochrome c"/>
    <property type="match status" value="3"/>
</dbReference>
<dbReference type="PROSITE" id="PS51007">
    <property type="entry name" value="CYTC"/>
    <property type="match status" value="3"/>
</dbReference>
<comment type="function">
    <text evidence="1">Cytochrome c component of the alcohol dehydrogenase multicomponent enzyme system which is involved in the production of acetic acid and in the ethanol oxidase respiratory chain. Quinohemoprotein alcohol dehydrogenase (ADH) catalyzes the oxidation of ethanol to acetaldehyde by transferring electrons to the ubiquinone embedded in the membrane phospholipids. The electrons transfer from ethanol to membranous ubiquinone occurs from pyrroloquinoline quinone (PQQ) to one heme c in subunit I (AdhA), and finally to two heme c in subunit II (AdhB). Besides ubiquinone reduction, ADH also has a ubiquinol (QH2) oxidation reaction which mediates electron transfer from ubiquinol to the non-energy generating bypass oxidase system. The electrons transfer occurs from ubiquinol (QH2) to the additional heme c within subunit II (AdhB).</text>
</comment>
<comment type="catalytic activity">
    <reaction evidence="1">
        <text>ethanol + a ubiquinone = a ubiquinol + acetaldehyde</text>
        <dbReference type="Rhea" id="RHEA:26442"/>
        <dbReference type="Rhea" id="RHEA-COMP:9565"/>
        <dbReference type="Rhea" id="RHEA-COMP:9566"/>
        <dbReference type="ChEBI" id="CHEBI:15343"/>
        <dbReference type="ChEBI" id="CHEBI:16236"/>
        <dbReference type="ChEBI" id="CHEBI:16389"/>
        <dbReference type="ChEBI" id="CHEBI:17976"/>
        <dbReference type="EC" id="1.1.5.5"/>
    </reaction>
</comment>
<comment type="cofactor">
    <cofactor evidence="1">
        <name>heme c</name>
        <dbReference type="ChEBI" id="CHEBI:61717"/>
    </cofactor>
    <text evidence="1">Binds 3 heme c groups covalently per subunit.</text>
</comment>
<comment type="subunit">
    <text evidence="1">The alcohol dehydrogenase multicomponent enzyme system is composed of a dehydrogenase subunit I (AdhA) and a cytochrome c subunit II (AdhB).</text>
</comment>
<comment type="subcellular location">
    <subcellularLocation>
        <location evidence="4">Cell membrane</location>
        <topology evidence="4">Peripheral membrane protein</topology>
        <orientation evidence="4">Periplasmic side</orientation>
    </subcellularLocation>
</comment>
<sequence length="468" mass="49758">MINRLKVTFSAAAFSLLAGTALAQTPDADSALVQKGAYVARLGDCVACHTALHGQSYAGGLEIKSPIGTIYSTNITPDPTYGIGRYTFAEFDEAVRHGIRKDGSTLYPAMPYPSFSRMTKEDMQALYAYFMHGVKPVAQPDKQPDISWPLSMRWPLGIWRMMFSPSPKDFTPAPGTDPEIARGDYLVTGPGHCGACHTPRGFAMQEKALDAAGGPDFLSGGAPIDNWVAPSLRNDPVVGLGRWSEDDIYTFLKSGRIDHSAVFGGMGDVVAWSTQYFTDDDLHAIAKYLKSLPPVPPSQGNYTYDPSTANMLASGNTASVPGADTYVKECAICHRNDGGGVARMFPPLAGNPVVVTENPTSLVNVIAHGGVLPPSNWAPSAVAMPGYSKSLSAQQIADVVNFIRTSWGNKAPGTVTAADVTKLRDTGAPVSSSGWNSVSSGWSVFLPQPYGSGWTFAPQTHTGQDAAQ</sequence>
<proteinExistence type="inferred from homology"/>
<evidence type="ECO:0000250" key="1">
    <source>
        <dbReference type="UniProtKB" id="Q47945"/>
    </source>
</evidence>
<evidence type="ECO:0000255" key="2"/>
<evidence type="ECO:0000255" key="3">
    <source>
        <dbReference type="PROSITE-ProRule" id="PRU00433"/>
    </source>
</evidence>
<evidence type="ECO:0000305" key="4"/>
<protein>
    <recommendedName>
        <fullName evidence="1">Alcohol dehydrogenase (quinone), cytochrome c subunit</fullName>
        <shortName evidence="1">ADH</shortName>
        <ecNumber evidence="1">1.1.5.5</ecNumber>
    </recommendedName>
    <alternativeName>
        <fullName evidence="1">Alcohol dehydrogenase (quinone), subunit II</fullName>
    </alternativeName>
    <alternativeName>
        <fullName evidence="1">Cytochrome c-553</fullName>
    </alternativeName>
    <alternativeName>
        <fullName evidence="1">Cytochrome c553</fullName>
    </alternativeName>
    <alternativeName>
        <fullName evidence="1">Ethanol:Q2 reductase</fullName>
    </alternativeName>
    <alternativeName>
        <fullName evidence="1">G3-ADH subunit II</fullName>
    </alternativeName>
    <alternativeName>
        <fullName evidence="1">Quinohemoprotein-cytochrome c complex</fullName>
    </alternativeName>
    <alternativeName>
        <fullName evidence="1">Ubiquinol oxidase</fullName>
    </alternativeName>
</protein>
<gene>
    <name evidence="1" type="primary">adhB</name>
</gene>
<accession>P0A389</accession>
<accession>Q03318</accession>
<organism>
    <name type="scientific">Komagataeibacter europaeus</name>
    <name type="common">Gluconacetobacter europaeus</name>
    <dbReference type="NCBI Taxonomy" id="33995"/>
    <lineage>
        <taxon>Bacteria</taxon>
        <taxon>Pseudomonadati</taxon>
        <taxon>Pseudomonadota</taxon>
        <taxon>Alphaproteobacteria</taxon>
        <taxon>Acetobacterales</taxon>
        <taxon>Acetobacteraceae</taxon>
        <taxon>Komagataeibacter</taxon>
    </lineage>
</organism>
<feature type="signal peptide" evidence="2">
    <location>
        <begin position="1"/>
        <end position="23"/>
    </location>
</feature>
<feature type="chain" id="PRO_0000006595" description="Alcohol dehydrogenase (quinone), cytochrome c subunit">
    <location>
        <begin position="24"/>
        <end position="468"/>
    </location>
</feature>
<feature type="domain" description="Cytochrome c 1" evidence="3">
    <location>
        <begin position="31"/>
        <end position="134"/>
    </location>
</feature>
<feature type="domain" description="Cytochrome c 2" evidence="3">
    <location>
        <begin position="178"/>
        <end position="293"/>
    </location>
</feature>
<feature type="domain" description="Cytochrome c 3" evidence="3">
    <location>
        <begin position="317"/>
        <end position="407"/>
    </location>
</feature>
<feature type="binding site" description="covalent" evidence="3">
    <location>
        <position position="45"/>
    </location>
    <ligand>
        <name>heme c</name>
        <dbReference type="ChEBI" id="CHEBI:61717"/>
        <label>1</label>
    </ligand>
</feature>
<feature type="binding site" description="covalent" evidence="3">
    <location>
        <position position="48"/>
    </location>
    <ligand>
        <name>heme c</name>
        <dbReference type="ChEBI" id="CHEBI:61717"/>
        <label>1</label>
    </ligand>
</feature>
<feature type="binding site" description="axial binding residue" evidence="3">
    <location>
        <position position="49"/>
    </location>
    <ligand>
        <name>heme c</name>
        <dbReference type="ChEBI" id="CHEBI:61717"/>
        <label>1</label>
    </ligand>
    <ligandPart>
        <name>Fe</name>
        <dbReference type="ChEBI" id="CHEBI:18248"/>
    </ligandPart>
</feature>
<feature type="binding site" description="covalent" evidence="3">
    <location>
        <position position="193"/>
    </location>
    <ligand>
        <name>heme c</name>
        <dbReference type="ChEBI" id="CHEBI:61717"/>
        <label>2</label>
    </ligand>
</feature>
<feature type="binding site" description="covalent" evidence="3">
    <location>
        <position position="196"/>
    </location>
    <ligand>
        <name>heme c</name>
        <dbReference type="ChEBI" id="CHEBI:61717"/>
        <label>2</label>
    </ligand>
</feature>
<feature type="binding site" description="axial binding residue" evidence="3">
    <location>
        <position position="197"/>
    </location>
    <ligand>
        <name>heme c</name>
        <dbReference type="ChEBI" id="CHEBI:61717"/>
        <label>2</label>
    </ligand>
    <ligandPart>
        <name>Fe</name>
        <dbReference type="ChEBI" id="CHEBI:18248"/>
    </ligandPart>
</feature>
<feature type="binding site" description="covalent" evidence="3">
    <location>
        <position position="330"/>
    </location>
    <ligand>
        <name>heme c</name>
        <dbReference type="ChEBI" id="CHEBI:61717"/>
        <label>3</label>
    </ligand>
</feature>
<feature type="binding site" description="covalent" evidence="3">
    <location>
        <position position="333"/>
    </location>
    <ligand>
        <name>heme c</name>
        <dbReference type="ChEBI" id="CHEBI:61717"/>
        <label>3</label>
    </ligand>
</feature>
<feature type="binding site" description="axial binding residue" evidence="3">
    <location>
        <position position="334"/>
    </location>
    <ligand>
        <name>heme c</name>
        <dbReference type="ChEBI" id="CHEBI:61717"/>
        <label>3</label>
    </ligand>
    <ligandPart>
        <name>Fe</name>
        <dbReference type="ChEBI" id="CHEBI:18248"/>
    </ligandPart>
</feature>